<name>ENKUR_PIG</name>
<gene>
    <name type="primary">ENKUR</name>
</gene>
<evidence type="ECO:0000250" key="1">
    <source>
        <dbReference type="UniProtKB" id="E1B836"/>
    </source>
</evidence>
<evidence type="ECO:0000250" key="2">
    <source>
        <dbReference type="UniProtKB" id="Q6SP97"/>
    </source>
</evidence>
<evidence type="ECO:0000250" key="3">
    <source>
        <dbReference type="UniProtKB" id="Q8TC29"/>
    </source>
</evidence>
<evidence type="ECO:0000255" key="4"/>
<evidence type="ECO:0000255" key="5">
    <source>
        <dbReference type="PROSITE-ProRule" id="PRU01000"/>
    </source>
</evidence>
<evidence type="ECO:0000256" key="6">
    <source>
        <dbReference type="SAM" id="MobiDB-lite"/>
    </source>
</evidence>
<evidence type="ECO:0000269" key="7">
    <source>
    </source>
</evidence>
<protein>
    <recommendedName>
        <fullName>Enkurin</fullName>
    </recommendedName>
</protein>
<sequence length="256" mass="29891">MDPTYSSESIYNLIPSDWKEPPQPPRYISIFKATVKDDMQKFKTAMKTMGPAKLEVPSPKDFLKKHSKEKTLPPKKKFDRHEPKKPPVPLRTEHPVMGIQSEKNFINTNAANVIMGVAKKPKPVYVDKRTGDKHDLETSGLVPKYINKKDYGVTPEYICKRNEEVKKAQEEYDNYIQENLRKAAMKRLSDEEREAVLQGLKKNWEEVHKEFQSLSVFIDSIPKKMRKQKLEEEMKQLEHDIAVLEKHKIIYIANKK</sequence>
<accession>A0A4X1TZW7</accession>
<accession>A0A286ZIE6</accession>
<reference key="1">
    <citation type="submission" date="2009-11" db="EMBL/GenBank/DDBJ databases">
        <authorList>
            <consortium name="Porcine genome sequencing project"/>
        </authorList>
    </citation>
    <scope>NUCLEOTIDE SEQUENCE [LARGE SCALE GENOMIC DNA]</scope>
    <source>
        <strain>Duroc</strain>
    </source>
</reference>
<reference key="2">
    <citation type="journal article" date="2019" name="PeerJ">
        <title>Genes of the pig, Sus scrofa, reconstructed with EvidentialGene.</title>
        <authorList>
            <person name="Gilbert D.G."/>
        </authorList>
    </citation>
    <scope>IDENTIFICATION</scope>
</reference>
<reference key="3">
    <citation type="journal article" date="2020" name="Nat. Commun.">
        <title>CFAP45 deficiency causes situs abnormalities and asthenospermia by disrupting an axonemal adenine nucleotide homeostasis module.</title>
        <authorList>
            <person name="Dougherty G.W."/>
            <person name="Mizuno K."/>
            <person name="Noethe-Menchen T."/>
            <person name="Ikawa Y."/>
            <person name="Boldt K."/>
            <person name="Ta-Shma A."/>
            <person name="Aprea I."/>
            <person name="Minegishi K."/>
            <person name="Pang Y.P."/>
            <person name="Pennekamp P."/>
            <person name="Loges N.T."/>
            <person name="Raidt J."/>
            <person name="Hjeij R."/>
            <person name="Wallmeier J."/>
            <person name="Mussaffi H."/>
            <person name="Perles Z."/>
            <person name="Elpeleg O."/>
            <person name="Rabert F."/>
            <person name="Shiratori H."/>
            <person name="Letteboer S.J."/>
            <person name="Horn N."/>
            <person name="Young S."/>
            <person name="Struenker T."/>
            <person name="Stumme F."/>
            <person name="Werner C."/>
            <person name="Olbrich H."/>
            <person name="Takaoka K."/>
            <person name="Ide T."/>
            <person name="Twan W.K."/>
            <person name="Biebach L."/>
            <person name="Grosse-Onnebrink J."/>
            <person name="Klinkenbusch J.A."/>
            <person name="Praveen K."/>
            <person name="Bracht D.C."/>
            <person name="Hoeben I.M."/>
            <person name="Junger K."/>
            <person name="Guetzlaff J."/>
            <person name="Cindric S."/>
            <person name="Aviram M."/>
            <person name="Kaiser T."/>
            <person name="Memari Y."/>
            <person name="Dzeja P.P."/>
            <person name="Dworniczak B."/>
            <person name="Ueffing M."/>
            <person name="Roepman R."/>
            <person name="Bartscherer K."/>
            <person name="Katsanis N."/>
            <person name="Davis E.E."/>
            <person name="Amirav I."/>
            <person name="Hamada H."/>
            <person name="Omran H."/>
        </authorList>
    </citation>
    <scope>INTERACTION WITH CFAP45</scope>
</reference>
<comment type="function">
    <text evidence="1 2">Adapter that functions to localize a calcium-sensitive signal transduction machinery in sperm to a calcium-permeable ion channel (By similarity). Microtubule inner protein (MIP) part of the dynein-decorated doublet microtubules (DMTs) in cilia axoneme, which is required for motile cilia beating (By similarity).</text>
</comment>
<comment type="subunit">
    <text evidence="2 7">Microtubule inner protein component of sperm flagellar doublet microtubules (By similarity). Binds calmodulin via its IQ domain. Interacts with TRPC1, TRPC2, TRPC5, but not TRPC3 (By similarity). Interacts with CFAP45 (PubMed:33139725).</text>
</comment>
<comment type="subcellular location">
    <subcellularLocation>
        <location evidence="1">Cytoplasm</location>
        <location evidence="1">Cytoskeleton</location>
        <location evidence="1">Cilium axoneme</location>
    </subcellularLocation>
    <subcellularLocation>
        <location evidence="2">Cytoplasm</location>
        <location evidence="2">Cytoskeleton</location>
        <location evidence="2">Flagellum axoneme</location>
    </subcellularLocation>
    <text evidence="2">Sperm acrosomal crescent and flagellar principal piece.</text>
</comment>
<comment type="domain">
    <text evidence="2">The IQ motif is involved in calmodulin binding.</text>
</comment>
<proteinExistence type="evidence at protein level"/>
<keyword id="KW-0002">3D-structure</keyword>
<keyword id="KW-0112">Calmodulin-binding</keyword>
<keyword id="KW-0966">Cell projection</keyword>
<keyword id="KW-0969">Cilium</keyword>
<keyword id="KW-0963">Cytoplasm</keyword>
<keyword id="KW-0206">Cytoskeleton</keyword>
<keyword id="KW-0282">Flagellum</keyword>
<keyword id="KW-1185">Reference proteome</keyword>
<keyword id="KW-0729">SH3-binding</keyword>
<dbReference type="EMBL" id="AEMK02000074">
    <property type="status" value="NOT_ANNOTATED_CDS"/>
    <property type="molecule type" value="Genomic_DNA"/>
</dbReference>
<dbReference type="EMBL" id="DQIR01123228">
    <property type="protein sequence ID" value="HDA78704.1"/>
    <property type="molecule type" value="Transcribed_RNA"/>
</dbReference>
<dbReference type="RefSeq" id="XP_013845184.1">
    <property type="nucleotide sequence ID" value="XM_013989730.1"/>
</dbReference>
<dbReference type="RefSeq" id="XP_020920571.1">
    <property type="nucleotide sequence ID" value="XM_021064912.1"/>
</dbReference>
<dbReference type="PDB" id="9CPC">
    <property type="method" value="EM"/>
    <property type="resolution" value="3.65 A"/>
    <property type="chains" value="2I/2J/2K=1-256"/>
</dbReference>
<dbReference type="PDBsum" id="9CPC"/>
<dbReference type="EMDB" id="EMD-45802"/>
<dbReference type="SMR" id="A0A4X1TZW7"/>
<dbReference type="FunCoup" id="A0A4X1TZW7">
    <property type="interactions" value="178"/>
</dbReference>
<dbReference type="STRING" id="9823.ENSSSCP00000031285"/>
<dbReference type="Ensembl" id="ENSSSCT00000045451.2">
    <property type="protein sequence ID" value="ENSSSCP00000031285.1"/>
    <property type="gene ID" value="ENSSSCG00000032929.2"/>
</dbReference>
<dbReference type="Ensembl" id="ENSSSCT00015072739.1">
    <property type="protein sequence ID" value="ENSSSCP00015029177.1"/>
    <property type="gene ID" value="ENSSSCG00015054604.1"/>
</dbReference>
<dbReference type="Ensembl" id="ENSSSCT00025056318.1">
    <property type="protein sequence ID" value="ENSSSCP00025023851.1"/>
    <property type="gene ID" value="ENSSSCG00025040839.1"/>
</dbReference>
<dbReference type="Ensembl" id="ENSSSCT00030087751.1">
    <property type="protein sequence ID" value="ENSSSCP00030040540.1"/>
    <property type="gene ID" value="ENSSSCG00030062649.1"/>
</dbReference>
<dbReference type="Ensembl" id="ENSSSCT00035103405.1">
    <property type="protein sequence ID" value="ENSSSCP00035044240.1"/>
    <property type="gene ID" value="ENSSSCG00035076031.1"/>
</dbReference>
<dbReference type="Ensembl" id="ENSSSCT00035103418.1">
    <property type="protein sequence ID" value="ENSSSCP00035044244.1"/>
    <property type="gene ID" value="ENSSSCG00035076031.1"/>
</dbReference>
<dbReference type="Ensembl" id="ENSSSCT00040034330.1">
    <property type="protein sequence ID" value="ENSSSCP00040014164.1"/>
    <property type="gene ID" value="ENSSSCG00040025515.1"/>
</dbReference>
<dbReference type="Ensembl" id="ENSSSCT00045035475.1">
    <property type="protein sequence ID" value="ENSSSCP00045024639.1"/>
    <property type="gene ID" value="ENSSSCG00045020798.1"/>
</dbReference>
<dbReference type="Ensembl" id="ENSSSCT00050096851.1">
    <property type="protein sequence ID" value="ENSSSCP00050041728.1"/>
    <property type="gene ID" value="ENSSSCG00050071002.1"/>
</dbReference>
<dbReference type="Ensembl" id="ENSSSCT00055039011.1">
    <property type="protein sequence ID" value="ENSSSCP00055031026.1"/>
    <property type="gene ID" value="ENSSSCG00055019785.1"/>
</dbReference>
<dbReference type="Ensembl" id="ENSSSCT00060012044.1">
    <property type="protein sequence ID" value="ENSSSCP00060004512.1"/>
    <property type="gene ID" value="ENSSSCG00060009326.1"/>
</dbReference>
<dbReference type="Ensembl" id="ENSSSCT00065058644.1">
    <property type="protein sequence ID" value="ENSSSCP00065025420.1"/>
    <property type="gene ID" value="ENSSSCG00065042876.1"/>
</dbReference>
<dbReference type="Ensembl" id="ENSSSCT00070025403.1">
    <property type="protein sequence ID" value="ENSSSCP00070021051.1"/>
    <property type="gene ID" value="ENSSSCG00070013020.1"/>
</dbReference>
<dbReference type="Ensembl" id="ENSSSCT00085007172">
    <property type="protein sequence ID" value="ENSSSCP00085005319"/>
    <property type="gene ID" value="ENSSSCG00085003845"/>
</dbReference>
<dbReference type="Ensembl" id="ENSSSCT00090008343">
    <property type="protein sequence ID" value="ENSSSCP00090005007"/>
    <property type="gene ID" value="ENSSSCG00090004795"/>
</dbReference>
<dbReference type="Ensembl" id="ENSSSCT00105003582">
    <property type="protein sequence ID" value="ENSSSCP00105002671"/>
    <property type="gene ID" value="ENSSSCG00105001855"/>
</dbReference>
<dbReference type="Ensembl" id="ENSSSCT00110041369">
    <property type="protein sequence ID" value="ENSSSCP00110028960"/>
    <property type="gene ID" value="ENSSSCG00110021393"/>
</dbReference>
<dbReference type="Ensembl" id="ENSSSCT00115005285">
    <property type="protein sequence ID" value="ENSSSCP00115004916"/>
    <property type="gene ID" value="ENSSSCG00115003153"/>
</dbReference>
<dbReference type="Ensembl" id="ENSSSCT00130003418">
    <property type="protein sequence ID" value="ENSSSCP00130002522"/>
    <property type="gene ID" value="ENSSSCG00130001738"/>
</dbReference>
<dbReference type="GeneID" id="100738267"/>
<dbReference type="VGNC" id="VGNC:96174">
    <property type="gene designation" value="ENKUR"/>
</dbReference>
<dbReference type="GeneTree" id="ENSGT00940000153866"/>
<dbReference type="InParanoid" id="A0A4X1TZW7"/>
<dbReference type="OMA" id="HRVIYIA"/>
<dbReference type="OrthoDB" id="2123594at2759"/>
<dbReference type="Proteomes" id="UP000008227">
    <property type="component" value="Chromosome 10"/>
</dbReference>
<dbReference type="Proteomes" id="UP000314985">
    <property type="component" value="Chromosome 10"/>
</dbReference>
<dbReference type="Proteomes" id="UP000694570">
    <property type="component" value="Unplaced"/>
</dbReference>
<dbReference type="Proteomes" id="UP000694571">
    <property type="component" value="Unplaced"/>
</dbReference>
<dbReference type="Proteomes" id="UP000694720">
    <property type="component" value="Unplaced"/>
</dbReference>
<dbReference type="Proteomes" id="UP000694722">
    <property type="component" value="Unplaced"/>
</dbReference>
<dbReference type="Proteomes" id="UP000694723">
    <property type="component" value="Unplaced"/>
</dbReference>
<dbReference type="Proteomes" id="UP000694724">
    <property type="component" value="Unplaced"/>
</dbReference>
<dbReference type="Proteomes" id="UP000694725">
    <property type="component" value="Unplaced"/>
</dbReference>
<dbReference type="Proteomes" id="UP000694726">
    <property type="component" value="Unplaced"/>
</dbReference>
<dbReference type="Proteomes" id="UP000694727">
    <property type="component" value="Unplaced"/>
</dbReference>
<dbReference type="Proteomes" id="UP000694728">
    <property type="component" value="Unplaced"/>
</dbReference>
<dbReference type="Bgee" id="ENSSSCG00000032929">
    <property type="expression patterns" value="Expressed in testis and 47 other cell types or tissues"/>
</dbReference>
<dbReference type="ExpressionAtlas" id="A0A4X1TZW7">
    <property type="expression patterns" value="baseline and differential"/>
</dbReference>
<dbReference type="GO" id="GO:0097728">
    <property type="term" value="C:9+0 motile cilium"/>
    <property type="evidence" value="ECO:0007669"/>
    <property type="project" value="Ensembl"/>
</dbReference>
<dbReference type="GO" id="GO:0001669">
    <property type="term" value="C:acrosomal vesicle"/>
    <property type="evidence" value="ECO:0000318"/>
    <property type="project" value="GO_Central"/>
</dbReference>
<dbReference type="GO" id="GO:0160112">
    <property type="term" value="C:axonemal B tubule inner sheath"/>
    <property type="evidence" value="ECO:0000250"/>
    <property type="project" value="UniProtKB"/>
</dbReference>
<dbReference type="GO" id="GO:0005879">
    <property type="term" value="C:axonemal microtubule"/>
    <property type="evidence" value="ECO:0000250"/>
    <property type="project" value="UniProtKB"/>
</dbReference>
<dbReference type="GO" id="GO:0036126">
    <property type="term" value="C:sperm flagellum"/>
    <property type="evidence" value="ECO:0000250"/>
    <property type="project" value="UniProtKB"/>
</dbReference>
<dbReference type="GO" id="GO:0097228">
    <property type="term" value="C:sperm principal piece"/>
    <property type="evidence" value="ECO:0007669"/>
    <property type="project" value="Ensembl"/>
</dbReference>
<dbReference type="GO" id="GO:0005516">
    <property type="term" value="F:calmodulin binding"/>
    <property type="evidence" value="ECO:0000318"/>
    <property type="project" value="GO_Central"/>
</dbReference>
<dbReference type="GO" id="GO:0017124">
    <property type="term" value="F:SH3 domain binding"/>
    <property type="evidence" value="ECO:0007669"/>
    <property type="project" value="UniProtKB-KW"/>
</dbReference>
<dbReference type="GO" id="GO:0061966">
    <property type="term" value="P:establishment of left/right asymmetry"/>
    <property type="evidence" value="ECO:0007669"/>
    <property type="project" value="Ensembl"/>
</dbReference>
<dbReference type="GO" id="GO:0030317">
    <property type="term" value="P:flagellated sperm motility"/>
    <property type="evidence" value="ECO:0000250"/>
    <property type="project" value="UniProtKB"/>
</dbReference>
<dbReference type="InterPro" id="IPR027012">
    <property type="entry name" value="Enkurin_dom"/>
</dbReference>
<dbReference type="InterPro" id="IPR052102">
    <property type="entry name" value="Enkurin_domain-protein"/>
</dbReference>
<dbReference type="PANTHER" id="PTHR21490:SF0">
    <property type="entry name" value="ENKURIN"/>
    <property type="match status" value="1"/>
</dbReference>
<dbReference type="PANTHER" id="PTHR21490">
    <property type="entry name" value="ENKURIN-RELATED"/>
    <property type="match status" value="1"/>
</dbReference>
<dbReference type="Pfam" id="PF13864">
    <property type="entry name" value="Enkurin"/>
    <property type="match status" value="1"/>
</dbReference>
<dbReference type="PROSITE" id="PS51665">
    <property type="entry name" value="ENKURIN"/>
    <property type="match status" value="1"/>
</dbReference>
<feature type="chain" id="PRO_0000454205" description="Enkurin">
    <location>
        <begin position="1"/>
        <end position="256"/>
    </location>
</feature>
<feature type="domain" description="Enkurin" evidence="5">
    <location>
        <begin position="160"/>
        <end position="252"/>
    </location>
</feature>
<feature type="domain" description="IQ" evidence="3">
    <location>
        <begin position="176"/>
        <end position="187"/>
    </location>
</feature>
<feature type="region of interest" description="Disordered" evidence="6">
    <location>
        <begin position="48"/>
        <end position="92"/>
    </location>
</feature>
<feature type="short sequence motif" description="SH3-binding" evidence="4">
    <location>
        <begin position="83"/>
        <end position="89"/>
    </location>
</feature>
<feature type="compositionally biased region" description="Basic and acidic residues" evidence="6">
    <location>
        <begin position="61"/>
        <end position="72"/>
    </location>
</feature>
<organism>
    <name type="scientific">Sus scrofa</name>
    <name type="common">Pig</name>
    <dbReference type="NCBI Taxonomy" id="9823"/>
    <lineage>
        <taxon>Eukaryota</taxon>
        <taxon>Metazoa</taxon>
        <taxon>Chordata</taxon>
        <taxon>Craniata</taxon>
        <taxon>Vertebrata</taxon>
        <taxon>Euteleostomi</taxon>
        <taxon>Mammalia</taxon>
        <taxon>Eutheria</taxon>
        <taxon>Laurasiatheria</taxon>
        <taxon>Artiodactyla</taxon>
        <taxon>Suina</taxon>
        <taxon>Suidae</taxon>
        <taxon>Sus</taxon>
    </lineage>
</organism>